<sequence>MALQQIVEQTVAGLGYDLVEIERSAGGLLRITIDLVWVPPTDEVSAAVGAEQFITVEDCEKVTRQLQFALEVEGVDYTRLEVSSPGIDRLLRNEADFKRFEGEVIDITLKQPMGAAAGGQVHANRKKFRGALERADSGGWQIVWSDEPPVKPGQRISKKRVPAPLQALGFTLDELREARLAPIVDFKGRGTKPGEPG</sequence>
<reference key="1">
    <citation type="submission" date="2006-12" db="EMBL/GenBank/DDBJ databases">
        <title>Complete sequence of chromosome 1 of Acidovorax sp. JS42.</title>
        <authorList>
            <person name="Copeland A."/>
            <person name="Lucas S."/>
            <person name="Lapidus A."/>
            <person name="Barry K."/>
            <person name="Detter J.C."/>
            <person name="Glavina del Rio T."/>
            <person name="Dalin E."/>
            <person name="Tice H."/>
            <person name="Pitluck S."/>
            <person name="Chertkov O."/>
            <person name="Brettin T."/>
            <person name="Bruce D."/>
            <person name="Han C."/>
            <person name="Tapia R."/>
            <person name="Gilna P."/>
            <person name="Schmutz J."/>
            <person name="Larimer F."/>
            <person name="Land M."/>
            <person name="Hauser L."/>
            <person name="Kyrpides N."/>
            <person name="Kim E."/>
            <person name="Stahl D."/>
            <person name="Richardson P."/>
        </authorList>
    </citation>
    <scope>NUCLEOTIDE SEQUENCE [LARGE SCALE GENOMIC DNA]</scope>
    <source>
        <strain>JS42</strain>
    </source>
</reference>
<comment type="function">
    <text evidence="1">Required for maturation of 30S ribosomal subunits.</text>
</comment>
<comment type="subcellular location">
    <subcellularLocation>
        <location evidence="1">Cytoplasm</location>
    </subcellularLocation>
</comment>
<comment type="similarity">
    <text evidence="1">Belongs to the RimP family.</text>
</comment>
<comment type="sequence caution" evidence="2">
    <conflict type="erroneous initiation">
        <sequence resource="EMBL-CDS" id="ABM42721"/>
    </conflict>
</comment>
<keyword id="KW-0963">Cytoplasm</keyword>
<keyword id="KW-0690">Ribosome biogenesis</keyword>
<organism>
    <name type="scientific">Acidovorax sp. (strain JS42)</name>
    <dbReference type="NCBI Taxonomy" id="232721"/>
    <lineage>
        <taxon>Bacteria</taxon>
        <taxon>Pseudomonadati</taxon>
        <taxon>Pseudomonadota</taxon>
        <taxon>Betaproteobacteria</taxon>
        <taxon>Burkholderiales</taxon>
        <taxon>Comamonadaceae</taxon>
        <taxon>Acidovorax</taxon>
    </lineage>
</organism>
<evidence type="ECO:0000255" key="1">
    <source>
        <dbReference type="HAMAP-Rule" id="MF_01077"/>
    </source>
</evidence>
<evidence type="ECO:0000305" key="2"/>
<dbReference type="EMBL" id="CP000539">
    <property type="protein sequence ID" value="ABM42721.1"/>
    <property type="status" value="ALT_INIT"/>
    <property type="molecule type" value="Genomic_DNA"/>
</dbReference>
<dbReference type="SMR" id="A1W8Z6"/>
<dbReference type="STRING" id="232721.Ajs_2563"/>
<dbReference type="KEGG" id="ajs:Ajs_2563"/>
<dbReference type="eggNOG" id="COG0779">
    <property type="taxonomic scope" value="Bacteria"/>
</dbReference>
<dbReference type="HOGENOM" id="CLU_070525_1_0_4"/>
<dbReference type="Proteomes" id="UP000000645">
    <property type="component" value="Chromosome"/>
</dbReference>
<dbReference type="GO" id="GO:0005829">
    <property type="term" value="C:cytosol"/>
    <property type="evidence" value="ECO:0007669"/>
    <property type="project" value="TreeGrafter"/>
</dbReference>
<dbReference type="GO" id="GO:0000028">
    <property type="term" value="P:ribosomal small subunit assembly"/>
    <property type="evidence" value="ECO:0007669"/>
    <property type="project" value="TreeGrafter"/>
</dbReference>
<dbReference type="GO" id="GO:0006412">
    <property type="term" value="P:translation"/>
    <property type="evidence" value="ECO:0007669"/>
    <property type="project" value="TreeGrafter"/>
</dbReference>
<dbReference type="CDD" id="cd01734">
    <property type="entry name" value="YlxS_C"/>
    <property type="match status" value="1"/>
</dbReference>
<dbReference type="Gene3D" id="3.30.300.70">
    <property type="entry name" value="RimP-like superfamily, N-terminal"/>
    <property type="match status" value="1"/>
</dbReference>
<dbReference type="HAMAP" id="MF_01077">
    <property type="entry name" value="RimP"/>
    <property type="match status" value="1"/>
</dbReference>
<dbReference type="InterPro" id="IPR003728">
    <property type="entry name" value="Ribosome_maturation_RimP"/>
</dbReference>
<dbReference type="InterPro" id="IPR028998">
    <property type="entry name" value="RimP_C"/>
</dbReference>
<dbReference type="InterPro" id="IPR036847">
    <property type="entry name" value="RimP_C_sf"/>
</dbReference>
<dbReference type="InterPro" id="IPR028989">
    <property type="entry name" value="RimP_N"/>
</dbReference>
<dbReference type="InterPro" id="IPR035956">
    <property type="entry name" value="RimP_N_sf"/>
</dbReference>
<dbReference type="NCBIfam" id="NF000929">
    <property type="entry name" value="PRK00092.2-1"/>
    <property type="match status" value="1"/>
</dbReference>
<dbReference type="NCBIfam" id="NF011235">
    <property type="entry name" value="PRK14642.1"/>
    <property type="match status" value="1"/>
</dbReference>
<dbReference type="PANTHER" id="PTHR33867">
    <property type="entry name" value="RIBOSOME MATURATION FACTOR RIMP"/>
    <property type="match status" value="1"/>
</dbReference>
<dbReference type="PANTHER" id="PTHR33867:SF1">
    <property type="entry name" value="RIBOSOME MATURATION FACTOR RIMP"/>
    <property type="match status" value="1"/>
</dbReference>
<dbReference type="Pfam" id="PF02576">
    <property type="entry name" value="RimP_N"/>
    <property type="match status" value="1"/>
</dbReference>
<dbReference type="SUPFAM" id="SSF74942">
    <property type="entry name" value="YhbC-like, C-terminal domain"/>
    <property type="match status" value="1"/>
</dbReference>
<dbReference type="SUPFAM" id="SSF75420">
    <property type="entry name" value="YhbC-like, N-terminal domain"/>
    <property type="match status" value="1"/>
</dbReference>
<feature type="chain" id="PRO_0000384590" description="Ribosome maturation factor RimP">
    <location>
        <begin position="1"/>
        <end position="197"/>
    </location>
</feature>
<proteinExistence type="inferred from homology"/>
<protein>
    <recommendedName>
        <fullName evidence="1">Ribosome maturation factor RimP</fullName>
    </recommendedName>
</protein>
<name>RIMP_ACISJ</name>
<gene>
    <name evidence="1" type="primary">rimP</name>
    <name type="ordered locus">Ajs_2563</name>
</gene>
<accession>A1W8Z6</accession>